<keyword id="KW-0963">Cytoplasm</keyword>
<keyword id="KW-0238">DNA-binding</keyword>
<keyword id="KW-1185">Reference proteome</keyword>
<keyword id="KW-0804">Transcription</keyword>
<keyword id="KW-0805">Transcription regulation</keyword>
<gene>
    <name type="ordered locus">CC_3243</name>
</gene>
<organism>
    <name type="scientific">Caulobacter vibrioides (strain ATCC 19089 / CIP 103742 / CB 15)</name>
    <name type="common">Caulobacter crescentus</name>
    <dbReference type="NCBI Taxonomy" id="190650"/>
    <lineage>
        <taxon>Bacteria</taxon>
        <taxon>Pseudomonadati</taxon>
        <taxon>Pseudomonadota</taxon>
        <taxon>Alphaproteobacteria</taxon>
        <taxon>Caulobacterales</taxon>
        <taxon>Caulobacteraceae</taxon>
        <taxon>Caulobacter</taxon>
    </lineage>
</organism>
<protein>
    <recommendedName>
        <fullName evidence="1">Probable transcriptional regulatory protein CC_3243</fullName>
    </recommendedName>
</protein>
<comment type="subcellular location">
    <subcellularLocation>
        <location evidence="1">Cytoplasm</location>
    </subcellularLocation>
</comment>
<comment type="similarity">
    <text evidence="1">Belongs to the TACO1 family.</text>
</comment>
<reference key="1">
    <citation type="journal article" date="2001" name="Proc. Natl. Acad. Sci. U.S.A.">
        <title>Complete genome sequence of Caulobacter crescentus.</title>
        <authorList>
            <person name="Nierman W.C."/>
            <person name="Feldblyum T.V."/>
            <person name="Laub M.T."/>
            <person name="Paulsen I.T."/>
            <person name="Nelson K.E."/>
            <person name="Eisen J.A."/>
            <person name="Heidelberg J.F."/>
            <person name="Alley M.R.K."/>
            <person name="Ohta N."/>
            <person name="Maddock J.R."/>
            <person name="Potocka I."/>
            <person name="Nelson W.C."/>
            <person name="Newton A."/>
            <person name="Stephens C."/>
            <person name="Phadke N.D."/>
            <person name="Ely B."/>
            <person name="DeBoy R.T."/>
            <person name="Dodson R.J."/>
            <person name="Durkin A.S."/>
            <person name="Gwinn M.L."/>
            <person name="Haft D.H."/>
            <person name="Kolonay J.F."/>
            <person name="Smit J."/>
            <person name="Craven M.B."/>
            <person name="Khouri H.M."/>
            <person name="Shetty J."/>
            <person name="Berry K.J."/>
            <person name="Utterback T.R."/>
            <person name="Tran K."/>
            <person name="Wolf A.M."/>
            <person name="Vamathevan J.J."/>
            <person name="Ermolaeva M.D."/>
            <person name="White O."/>
            <person name="Salzberg S.L."/>
            <person name="Venter J.C."/>
            <person name="Shapiro L."/>
            <person name="Fraser C.M."/>
        </authorList>
    </citation>
    <scope>NUCLEOTIDE SEQUENCE [LARGE SCALE GENOMIC DNA]</scope>
    <source>
        <strain>ATCC 19089 / CIP 103742 / CB 15</strain>
    </source>
</reference>
<sequence length="251" mass="26902">MAGHSKFKNIMHRKGRADAARSKLFSKLSREITVAAKTGLPDPAMNPRLRLAVNNAKAESLPKDVIERAIKKSQMGDAADYSEIRYEGVAAGGVGIIVEVLTDNKNRAAANVRSYFTKMGGNMGATGSVTFNFDRVGQISYPAKAASEDDMMEAAIEAGADDVTSDMDEEGEGHTVYTAFESLNDVAAALEAKFGAASNTKIAWRPKMQVPVTGDAVATLMKLLDMLDEDDDVQAVYSNEDISDEDLAKLG</sequence>
<feature type="chain" id="PRO_0000175781" description="Probable transcriptional regulatory protein CC_3243">
    <location>
        <begin position="1"/>
        <end position="251"/>
    </location>
</feature>
<dbReference type="EMBL" id="AE005673">
    <property type="protein sequence ID" value="AAK25205.1"/>
    <property type="molecule type" value="Genomic_DNA"/>
</dbReference>
<dbReference type="PIR" id="A87651">
    <property type="entry name" value="A87651"/>
</dbReference>
<dbReference type="RefSeq" id="NP_422037.1">
    <property type="nucleotide sequence ID" value="NC_002696.2"/>
</dbReference>
<dbReference type="RefSeq" id="WP_010921076.1">
    <property type="nucleotide sequence ID" value="NC_002696.2"/>
</dbReference>
<dbReference type="SMR" id="Q9A3G1"/>
<dbReference type="STRING" id="190650.CC_3243"/>
<dbReference type="EnsemblBacteria" id="AAK25205">
    <property type="protein sequence ID" value="AAK25205"/>
    <property type="gene ID" value="CC_3243"/>
</dbReference>
<dbReference type="KEGG" id="ccr:CC_3243"/>
<dbReference type="PATRIC" id="fig|190650.5.peg.3248"/>
<dbReference type="eggNOG" id="COG0217">
    <property type="taxonomic scope" value="Bacteria"/>
</dbReference>
<dbReference type="HOGENOM" id="CLU_062974_3_0_5"/>
<dbReference type="BioCyc" id="CAULO:CC3243-MONOMER"/>
<dbReference type="Proteomes" id="UP000001816">
    <property type="component" value="Chromosome"/>
</dbReference>
<dbReference type="GO" id="GO:0005829">
    <property type="term" value="C:cytosol"/>
    <property type="evidence" value="ECO:0007669"/>
    <property type="project" value="TreeGrafter"/>
</dbReference>
<dbReference type="GO" id="GO:0003677">
    <property type="term" value="F:DNA binding"/>
    <property type="evidence" value="ECO:0007669"/>
    <property type="project" value="UniProtKB-UniRule"/>
</dbReference>
<dbReference type="GO" id="GO:0006355">
    <property type="term" value="P:regulation of DNA-templated transcription"/>
    <property type="evidence" value="ECO:0007669"/>
    <property type="project" value="UniProtKB-UniRule"/>
</dbReference>
<dbReference type="FunFam" id="1.10.10.200:FF:000002">
    <property type="entry name" value="Probable transcriptional regulatory protein CLM62_37755"/>
    <property type="match status" value="1"/>
</dbReference>
<dbReference type="Gene3D" id="1.10.10.200">
    <property type="match status" value="1"/>
</dbReference>
<dbReference type="Gene3D" id="3.30.70.980">
    <property type="match status" value="2"/>
</dbReference>
<dbReference type="HAMAP" id="MF_00693">
    <property type="entry name" value="Transcrip_reg_TACO1"/>
    <property type="match status" value="1"/>
</dbReference>
<dbReference type="InterPro" id="IPR017856">
    <property type="entry name" value="Integrase-like_N"/>
</dbReference>
<dbReference type="InterPro" id="IPR048300">
    <property type="entry name" value="TACO1_YebC-like_2nd/3rd_dom"/>
</dbReference>
<dbReference type="InterPro" id="IPR049083">
    <property type="entry name" value="TACO1_YebC_N"/>
</dbReference>
<dbReference type="InterPro" id="IPR002876">
    <property type="entry name" value="Transcrip_reg_TACO1-like"/>
</dbReference>
<dbReference type="InterPro" id="IPR026564">
    <property type="entry name" value="Transcrip_reg_TACO1-like_dom3"/>
</dbReference>
<dbReference type="InterPro" id="IPR029072">
    <property type="entry name" value="YebC-like"/>
</dbReference>
<dbReference type="NCBIfam" id="NF001030">
    <property type="entry name" value="PRK00110.1"/>
    <property type="match status" value="1"/>
</dbReference>
<dbReference type="NCBIfam" id="NF009044">
    <property type="entry name" value="PRK12378.1"/>
    <property type="match status" value="1"/>
</dbReference>
<dbReference type="NCBIfam" id="TIGR01033">
    <property type="entry name" value="YebC/PmpR family DNA-binding transcriptional regulator"/>
    <property type="match status" value="1"/>
</dbReference>
<dbReference type="PANTHER" id="PTHR12532:SF6">
    <property type="entry name" value="TRANSCRIPTIONAL REGULATORY PROTEIN YEBC-RELATED"/>
    <property type="match status" value="1"/>
</dbReference>
<dbReference type="PANTHER" id="PTHR12532">
    <property type="entry name" value="TRANSLATIONAL ACTIVATOR OF CYTOCHROME C OXIDASE 1"/>
    <property type="match status" value="1"/>
</dbReference>
<dbReference type="Pfam" id="PF20772">
    <property type="entry name" value="TACO1_YebC_N"/>
    <property type="match status" value="1"/>
</dbReference>
<dbReference type="Pfam" id="PF01709">
    <property type="entry name" value="Transcrip_reg"/>
    <property type="match status" value="1"/>
</dbReference>
<dbReference type="SUPFAM" id="SSF75625">
    <property type="entry name" value="YebC-like"/>
    <property type="match status" value="1"/>
</dbReference>
<name>Y3243_CAUVC</name>
<accession>Q9A3G1</accession>
<evidence type="ECO:0000255" key="1">
    <source>
        <dbReference type="HAMAP-Rule" id="MF_00693"/>
    </source>
</evidence>
<proteinExistence type="inferred from homology"/>